<protein>
    <recommendedName>
        <fullName evidence="4">Esculentin-2Rb</fullName>
    </recommendedName>
</protein>
<evidence type="ECO:0000250" key="1">
    <source>
        <dbReference type="UniProtKB" id="P40846"/>
    </source>
</evidence>
<evidence type="ECO:0000255" key="2"/>
<evidence type="ECO:0000269" key="3">
    <source>
    </source>
</evidence>
<evidence type="ECO:0000303" key="4">
    <source>
    </source>
</evidence>
<evidence type="ECO:0000305" key="5"/>
<evidence type="ECO:0000305" key="6">
    <source>
    </source>
</evidence>
<sequence>GIFSLVKGVAKLAGKTLAKEGGKFGLELAMCKIAKQC</sequence>
<proteinExistence type="evidence at protein level"/>
<accession>P86021</accession>
<organism>
    <name type="scientific">Pelophylax ridibundus</name>
    <name type="common">Marsh frog</name>
    <name type="synonym">Rana ridibunda</name>
    <dbReference type="NCBI Taxonomy" id="8406"/>
    <lineage>
        <taxon>Eukaryota</taxon>
        <taxon>Metazoa</taxon>
        <taxon>Chordata</taxon>
        <taxon>Craniata</taxon>
        <taxon>Vertebrata</taxon>
        <taxon>Euteleostomi</taxon>
        <taxon>Amphibia</taxon>
        <taxon>Batrachia</taxon>
        <taxon>Anura</taxon>
        <taxon>Neobatrachia</taxon>
        <taxon>Ranoidea</taxon>
        <taxon>Ranidae</taxon>
        <taxon>Pelophylax</taxon>
    </lineage>
</organism>
<comment type="function">
    <text evidence="1">Antimicrobial peptide.</text>
</comment>
<comment type="subcellular location">
    <subcellularLocation>
        <location evidence="3">Secreted</location>
    </subcellularLocation>
</comment>
<comment type="tissue specificity">
    <text evidence="6">Expressed by the skin glands.</text>
</comment>
<comment type="mass spectrometry"/>
<comment type="similarity">
    <text evidence="2">Belongs to the frog skin active peptide (FSAP) family. Esculentin subfamily.</text>
</comment>
<reference evidence="5" key="1">
    <citation type="journal article" date="2008" name="Rapid Commun. Mass Spectrom.">
        <title>De novo sequencing of peptides secreted by the skin glands of the caucasian green frog Rana ridibunda.</title>
        <authorList>
            <person name="Samgina T.Y."/>
            <person name="Artemenko K.A."/>
            <person name="Gorshkov V.A."/>
            <person name="Ogourtsov S.V."/>
            <person name="Zubarev R.A."/>
            <person name="Lebedev A.T."/>
        </authorList>
    </citation>
    <scope>PROTEIN SEQUENCE</scope>
    <scope>MASS SPECTROMETRY</scope>
    <scope>DISULFIDE BOND</scope>
    <scope>SUBCELLULAR LOCATION</scope>
    <source>
        <tissue evidence="3">Skin secretion</tissue>
    </source>
</reference>
<keyword id="KW-0878">Amphibian defense peptide</keyword>
<keyword id="KW-0044">Antibiotic</keyword>
<keyword id="KW-0929">Antimicrobial</keyword>
<keyword id="KW-0903">Direct protein sequencing</keyword>
<keyword id="KW-1015">Disulfide bond</keyword>
<keyword id="KW-0964">Secreted</keyword>
<name>ES2RB_PELRI</name>
<dbReference type="SMR" id="P86021"/>
<dbReference type="GO" id="GO:0005576">
    <property type="term" value="C:extracellular region"/>
    <property type="evidence" value="ECO:0000314"/>
    <property type="project" value="UniProtKB"/>
</dbReference>
<dbReference type="GO" id="GO:0042742">
    <property type="term" value="P:defense response to bacterium"/>
    <property type="evidence" value="ECO:0007669"/>
    <property type="project" value="UniProtKB-KW"/>
</dbReference>
<dbReference type="InterPro" id="IPR012521">
    <property type="entry name" value="Antimicrobial_frog_2"/>
</dbReference>
<dbReference type="Pfam" id="PF08023">
    <property type="entry name" value="Antimicrobial_2"/>
    <property type="match status" value="1"/>
</dbReference>
<feature type="peptide" id="PRO_0000361076" description="Esculentin-2Rb" evidence="3">
    <location>
        <begin position="1"/>
        <end position="37"/>
    </location>
</feature>
<feature type="disulfide bond" evidence="3">
    <location>
        <begin position="31"/>
        <end position="37"/>
    </location>
</feature>